<evidence type="ECO:0000250" key="1">
    <source>
        <dbReference type="UniProtKB" id="Q69CK0"/>
    </source>
</evidence>
<evidence type="ECO:0000305" key="2"/>
<keyword id="KW-0123">Cardiotoxin</keyword>
<keyword id="KW-1015">Disulfide bond</keyword>
<keyword id="KW-1213">G-protein coupled receptor impairing toxin</keyword>
<keyword id="KW-0964">Secreted</keyword>
<keyword id="KW-0732">Signal</keyword>
<keyword id="KW-0800">Toxin</keyword>
<reference key="1">
    <citation type="journal article" date="2006" name="Biochem. J.">
        <title>Novel genes encoding six kinds of three-finger toxins in Ophiophagus hannah (king cobra) and function characterization of two recombinant long-chain neurotoxins.</title>
        <authorList>
            <person name="Li J."/>
            <person name="Zhang H."/>
            <person name="Liu J."/>
            <person name="Xu K."/>
        </authorList>
    </citation>
    <scope>NUCLEOTIDE SEQUENCE [MRNA]</scope>
    <source>
        <tissue>Venom gland</tissue>
    </source>
</reference>
<feature type="signal peptide" evidence="1">
    <location>
        <begin position="1"/>
        <end position="21"/>
    </location>
</feature>
<feature type="chain" id="PRO_5000006490" description="Beta-cardiotoxin CTX21">
    <location>
        <begin position="22"/>
        <end position="84"/>
    </location>
</feature>
<feature type="disulfide bond" evidence="1">
    <location>
        <begin position="24"/>
        <end position="43"/>
    </location>
</feature>
<feature type="disulfide bond" evidence="1">
    <location>
        <begin position="36"/>
        <end position="61"/>
    </location>
</feature>
<feature type="disulfide bond" evidence="1">
    <location>
        <begin position="65"/>
        <end position="76"/>
    </location>
</feature>
<feature type="disulfide bond" evidence="1">
    <location>
        <begin position="77"/>
        <end position="82"/>
    </location>
</feature>
<sequence length="84" mass="9255">MKTLLLTLVVVTIVCLDLGYTRKCLNTPLPLIYTTCPIGQDKCVKMTIKKLPSKYDVIRGCTDICPKSSADVVVVCCDTNKCNK</sequence>
<protein>
    <recommendedName>
        <fullName>Beta-cardiotoxin CTX21</fullName>
    </recommendedName>
</protein>
<proteinExistence type="inferred from homology"/>
<organism>
    <name type="scientific">Ophiophagus hannah</name>
    <name type="common">King cobra</name>
    <name type="synonym">Naja hannah</name>
    <dbReference type="NCBI Taxonomy" id="8665"/>
    <lineage>
        <taxon>Eukaryota</taxon>
        <taxon>Metazoa</taxon>
        <taxon>Chordata</taxon>
        <taxon>Craniata</taxon>
        <taxon>Vertebrata</taxon>
        <taxon>Euteleostomi</taxon>
        <taxon>Lepidosauria</taxon>
        <taxon>Squamata</taxon>
        <taxon>Bifurcata</taxon>
        <taxon>Unidentata</taxon>
        <taxon>Episquamata</taxon>
        <taxon>Toxicofera</taxon>
        <taxon>Serpentes</taxon>
        <taxon>Colubroidea</taxon>
        <taxon>Elapidae</taxon>
        <taxon>Elapinae</taxon>
        <taxon>Ophiophagus</taxon>
    </lineage>
</organism>
<comment type="function">
    <text evidence="1">Acts as a beta-blocker by binding to beta-1 and beta-2 adrenergic receptors (ADRB1 and ADRB2). It dose-dependently decreases the heart rate (bradycardia), whereas conventional cardiotoxins increases it. At 100 mg/kg, intraperitoneal injection into mice provokes labored breathing, impaired locomotion, lack of response to external stimuli, and death (after 30 minutes).</text>
</comment>
<comment type="subcellular location">
    <subcellularLocation>
        <location evidence="1">Secreted</location>
    </subcellularLocation>
</comment>
<comment type="tissue specificity">
    <text evidence="2">Expressed by the venom gland.</text>
</comment>
<comment type="miscellaneous">
    <text evidence="1">Negative results: does not affect blood coagulation and does not show significant hemolytic activity.</text>
</comment>
<comment type="miscellaneous">
    <text evidence="2">Is classified as a P-type cytotoxin, since a proline residue stands at position 52 (Pro-31 in standard classification).</text>
</comment>
<comment type="similarity">
    <text evidence="2">Belongs to the three-finger toxin family. Short-chain subfamily. Aminergic toxin sub-subfamily.</text>
</comment>
<dbReference type="EMBL" id="DQ273580">
    <property type="protein sequence ID" value="ABB83634.1"/>
    <property type="molecule type" value="mRNA"/>
</dbReference>
<dbReference type="SMR" id="Q2VBN5"/>
<dbReference type="GO" id="GO:0005576">
    <property type="term" value="C:extracellular region"/>
    <property type="evidence" value="ECO:0007669"/>
    <property type="project" value="UniProtKB-SubCell"/>
</dbReference>
<dbReference type="GO" id="GO:0090729">
    <property type="term" value="F:toxin activity"/>
    <property type="evidence" value="ECO:0007669"/>
    <property type="project" value="UniProtKB-KW"/>
</dbReference>
<dbReference type="CDD" id="cd00206">
    <property type="entry name" value="TFP_snake_toxin"/>
    <property type="match status" value="1"/>
</dbReference>
<dbReference type="Gene3D" id="2.10.60.10">
    <property type="entry name" value="CD59"/>
    <property type="match status" value="1"/>
</dbReference>
<dbReference type="InterPro" id="IPR003572">
    <property type="entry name" value="Cytotoxin_Cobra"/>
</dbReference>
<dbReference type="InterPro" id="IPR003571">
    <property type="entry name" value="Snake_3FTx"/>
</dbReference>
<dbReference type="InterPro" id="IPR045860">
    <property type="entry name" value="Snake_toxin-like_sf"/>
</dbReference>
<dbReference type="InterPro" id="IPR018354">
    <property type="entry name" value="Snake_toxin_con_site"/>
</dbReference>
<dbReference type="InterPro" id="IPR054131">
    <property type="entry name" value="Toxin_cobra-type"/>
</dbReference>
<dbReference type="Pfam" id="PF21947">
    <property type="entry name" value="Toxin_cobra-type"/>
    <property type="match status" value="1"/>
</dbReference>
<dbReference type="PRINTS" id="PR00282">
    <property type="entry name" value="CYTOTOXIN"/>
</dbReference>
<dbReference type="SUPFAM" id="SSF57302">
    <property type="entry name" value="Snake toxin-like"/>
    <property type="match status" value="1"/>
</dbReference>
<dbReference type="PROSITE" id="PS00272">
    <property type="entry name" value="SNAKE_TOXIN"/>
    <property type="match status" value="1"/>
</dbReference>
<accession>Q2VBN5</accession>
<name>3SDC1_OPHHA</name>